<protein>
    <recommendedName>
        <fullName>Argininosuccinate lyase</fullName>
        <shortName>ASAL</shortName>
        <ecNumber evidence="1">4.3.2.1</ecNumber>
    </recommendedName>
    <alternativeName>
        <fullName>Arginosuccinase</fullName>
    </alternativeName>
</protein>
<dbReference type="EC" id="4.3.2.1" evidence="1"/>
<dbReference type="EMBL" id="AB125154">
    <property type="protein sequence ID" value="BAD51942.1"/>
    <property type="molecule type" value="mRNA"/>
</dbReference>
<dbReference type="SMR" id="Q60HH3"/>
<dbReference type="STRING" id="9541.ENSMFAP00000040092"/>
<dbReference type="UniPathway" id="UPA00068">
    <property type="reaction ID" value="UER00114"/>
</dbReference>
<dbReference type="UniPathway" id="UPA00158">
    <property type="reaction ID" value="UER00273"/>
</dbReference>
<dbReference type="Proteomes" id="UP000233100">
    <property type="component" value="Unplaced"/>
</dbReference>
<dbReference type="GO" id="GO:0005829">
    <property type="term" value="C:cytosol"/>
    <property type="evidence" value="ECO:0007669"/>
    <property type="project" value="TreeGrafter"/>
</dbReference>
<dbReference type="GO" id="GO:0004056">
    <property type="term" value="F:argininosuccinate lyase activity"/>
    <property type="evidence" value="ECO:0000250"/>
    <property type="project" value="UniProtKB"/>
</dbReference>
<dbReference type="GO" id="GO:0042450">
    <property type="term" value="P:arginine biosynthetic process via ornithine"/>
    <property type="evidence" value="ECO:0007669"/>
    <property type="project" value="InterPro"/>
</dbReference>
<dbReference type="GO" id="GO:0006526">
    <property type="term" value="P:L-arginine biosynthetic process"/>
    <property type="evidence" value="ECO:0000250"/>
    <property type="project" value="UniProtKB"/>
</dbReference>
<dbReference type="GO" id="GO:0045429">
    <property type="term" value="P:positive regulation of nitric oxide biosynthetic process"/>
    <property type="evidence" value="ECO:0000250"/>
    <property type="project" value="UniProtKB"/>
</dbReference>
<dbReference type="GO" id="GO:0000050">
    <property type="term" value="P:urea cycle"/>
    <property type="evidence" value="ECO:0007669"/>
    <property type="project" value="UniProtKB-UniPathway"/>
</dbReference>
<dbReference type="CDD" id="cd01359">
    <property type="entry name" value="Argininosuccinate_lyase"/>
    <property type="match status" value="1"/>
</dbReference>
<dbReference type="FunFam" id="1.10.40.30:FF:000001">
    <property type="entry name" value="Argininosuccinate lyase"/>
    <property type="match status" value="1"/>
</dbReference>
<dbReference type="FunFam" id="1.20.200.10:FF:000015">
    <property type="entry name" value="argininosuccinate lyase isoform X2"/>
    <property type="match status" value="2"/>
</dbReference>
<dbReference type="FunFam" id="1.10.275.10:FF:000014">
    <property type="entry name" value="Os03g0824900 protein"/>
    <property type="match status" value="1"/>
</dbReference>
<dbReference type="Gene3D" id="1.10.40.30">
    <property type="entry name" value="Fumarase/aspartase (C-terminal domain)"/>
    <property type="match status" value="1"/>
</dbReference>
<dbReference type="Gene3D" id="1.20.200.10">
    <property type="entry name" value="Fumarase/aspartase (Central domain)"/>
    <property type="match status" value="1"/>
</dbReference>
<dbReference type="Gene3D" id="1.10.275.10">
    <property type="entry name" value="Fumarase/aspartase (N-terminal domain)"/>
    <property type="match status" value="1"/>
</dbReference>
<dbReference type="HAMAP" id="MF_00006">
    <property type="entry name" value="Arg_succ_lyase"/>
    <property type="match status" value="1"/>
</dbReference>
<dbReference type="InterPro" id="IPR029419">
    <property type="entry name" value="Arg_succ_lyase_C"/>
</dbReference>
<dbReference type="InterPro" id="IPR009049">
    <property type="entry name" value="Argininosuccinate_lyase"/>
</dbReference>
<dbReference type="InterPro" id="IPR024083">
    <property type="entry name" value="Fumarase/histidase_N"/>
</dbReference>
<dbReference type="InterPro" id="IPR020557">
    <property type="entry name" value="Fumarate_lyase_CS"/>
</dbReference>
<dbReference type="InterPro" id="IPR000362">
    <property type="entry name" value="Fumarate_lyase_fam"/>
</dbReference>
<dbReference type="InterPro" id="IPR022761">
    <property type="entry name" value="Fumarate_lyase_N"/>
</dbReference>
<dbReference type="InterPro" id="IPR008948">
    <property type="entry name" value="L-Aspartase-like"/>
</dbReference>
<dbReference type="NCBIfam" id="TIGR00838">
    <property type="entry name" value="argH"/>
    <property type="match status" value="1"/>
</dbReference>
<dbReference type="PANTHER" id="PTHR43814">
    <property type="entry name" value="ARGININOSUCCINATE LYASE"/>
    <property type="match status" value="1"/>
</dbReference>
<dbReference type="PANTHER" id="PTHR43814:SF1">
    <property type="entry name" value="ARGININOSUCCINATE LYASE"/>
    <property type="match status" value="1"/>
</dbReference>
<dbReference type="Pfam" id="PF14698">
    <property type="entry name" value="ASL_C2"/>
    <property type="match status" value="1"/>
</dbReference>
<dbReference type="Pfam" id="PF00206">
    <property type="entry name" value="Lyase_1"/>
    <property type="match status" value="1"/>
</dbReference>
<dbReference type="PRINTS" id="PR00145">
    <property type="entry name" value="ARGSUCLYASE"/>
</dbReference>
<dbReference type="PRINTS" id="PR00149">
    <property type="entry name" value="FUMRATELYASE"/>
</dbReference>
<dbReference type="SUPFAM" id="SSF48557">
    <property type="entry name" value="L-aspartase-like"/>
    <property type="match status" value="1"/>
</dbReference>
<dbReference type="PROSITE" id="PS00163">
    <property type="entry name" value="FUMARATE_LYASES"/>
    <property type="match status" value="1"/>
</dbReference>
<evidence type="ECO:0000250" key="1">
    <source>
        <dbReference type="UniProtKB" id="P04424"/>
    </source>
</evidence>
<evidence type="ECO:0000250" key="2">
    <source>
        <dbReference type="UniProtKB" id="P24058"/>
    </source>
</evidence>
<evidence type="ECO:0000250" key="3">
    <source>
        <dbReference type="UniProtKB" id="Q91YI0"/>
    </source>
</evidence>
<evidence type="ECO:0000305" key="4"/>
<organism>
    <name type="scientific">Macaca fascicularis</name>
    <name type="common">Crab-eating macaque</name>
    <name type="synonym">Cynomolgus monkey</name>
    <dbReference type="NCBI Taxonomy" id="9541"/>
    <lineage>
        <taxon>Eukaryota</taxon>
        <taxon>Metazoa</taxon>
        <taxon>Chordata</taxon>
        <taxon>Craniata</taxon>
        <taxon>Vertebrata</taxon>
        <taxon>Euteleostomi</taxon>
        <taxon>Mammalia</taxon>
        <taxon>Eutheria</taxon>
        <taxon>Euarchontoglires</taxon>
        <taxon>Primates</taxon>
        <taxon>Haplorrhini</taxon>
        <taxon>Catarrhini</taxon>
        <taxon>Cercopithecidae</taxon>
        <taxon>Cercopithecinae</taxon>
        <taxon>Macaca</taxon>
    </lineage>
</organism>
<comment type="function">
    <text evidence="1">Catalyzes the reversible cleavage of L-argininosuccinate to fumarate and L-arginine, an intermediate step reaction in the urea cycle mostly providing for hepatic nitrogen detoxification into excretable urea as well as de novo L-arginine synthesis in nonhepatic tissues (By similarity). Essential regulator of intracellular and extracellular L-arginine pools. As part of citrulline-nitric oxide cycle, forms tissue-specific multiprotein complexes with argininosuccinate synthase ASS1, transport protein SLC7A1 and nitric oxide synthase NOS1, NOS2 or NOS3, allowing for cell-autonomous L-arginine synthesis while channeling extracellular L-arginine to nitric oxide synthesis pathway (By similarity).</text>
</comment>
<comment type="catalytic activity">
    <reaction evidence="1">
        <text>2-(N(omega)-L-arginino)succinate = fumarate + L-arginine</text>
        <dbReference type="Rhea" id="RHEA:24020"/>
        <dbReference type="ChEBI" id="CHEBI:29806"/>
        <dbReference type="ChEBI" id="CHEBI:32682"/>
        <dbReference type="ChEBI" id="CHEBI:57472"/>
        <dbReference type="EC" id="4.3.2.1"/>
    </reaction>
    <physiologicalReaction direction="left-to-right" evidence="1">
        <dbReference type="Rhea" id="RHEA:24021"/>
    </physiologicalReaction>
    <physiologicalReaction direction="right-to-left" evidence="1">
        <dbReference type="Rhea" id="RHEA:24022"/>
    </physiologicalReaction>
</comment>
<comment type="activity regulation">
    <text evidence="1">Enzyme activity is regulated by acetylation.</text>
</comment>
<comment type="pathway">
    <text evidence="1">Amino-acid biosynthesis; L-arginine biosynthesis; L-arginine from L-ornithine and carbamoyl phosphate: step 3/3.</text>
</comment>
<comment type="pathway">
    <text evidence="1">Nitrogen metabolism; urea cycle; L-arginine and fumarate from (N(omega)-L-arginino)succinate: step 1/1.</text>
</comment>
<comment type="subunit">
    <text evidence="1 3">Homotetramer (By similarity). Forms tissue-specific complexes with ASS1, SLC7A1, HSP90AA1 and nitric oxide synthase NOS1, NOS2 or NOS3; the complex maintenance is independent of ASL catalytic function (By similarity).</text>
</comment>
<comment type="PTM">
    <text evidence="1">Acetylation modifies enzyme activity in response to alterations of extracellular nutrient availability. Acetylation increased with trichostin A (TSA) or with nicotinamide (NAM). Glucose increases acetylation by about a factor of 3 with decreasing enzyme activity. Acetylation on Lys-288 is decreased on the addition of extra amino acids resulting in activation of enzyme activity.</text>
</comment>
<comment type="similarity">
    <text evidence="4">Belongs to the lyase 1 family. Argininosuccinate lyase subfamily.</text>
</comment>
<gene>
    <name type="primary">ASL</name>
    <name type="ORF">QccE-15270</name>
</gene>
<reference key="1">
    <citation type="submission" date="2003-10" db="EMBL/GenBank/DDBJ databases">
        <title>Isolation and characterization of cDNA for macaque neurological disease genes.</title>
        <authorList>
            <person name="Kusuda J."/>
            <person name="Osada N."/>
            <person name="Tanuma R."/>
            <person name="Hirata M."/>
            <person name="Sugano S."/>
            <person name="Hashimoto K."/>
        </authorList>
    </citation>
    <scope>NUCLEOTIDE SEQUENCE [LARGE SCALE MRNA]</scope>
    <source>
        <tissue>Brain cortex</tissue>
    </source>
</reference>
<accession>Q60HH3</accession>
<feature type="initiator methionine" description="Removed" evidence="3">
    <location>
        <position position="1"/>
    </location>
</feature>
<feature type="chain" id="PRO_0000137713" description="Argininosuccinate lyase">
    <location>
        <begin position="2"/>
        <end position="464"/>
    </location>
</feature>
<feature type="active site" description="Proton acceptor" evidence="2">
    <location>
        <position position="160"/>
    </location>
</feature>
<feature type="active site" description="Proton donor" evidence="2">
    <location>
        <position position="281"/>
    </location>
</feature>
<feature type="binding site" description="in chain A" evidence="2">
    <location>
        <position position="27"/>
    </location>
    <ligand>
        <name>2-(N(omega)-L-arginino)succinate</name>
        <dbReference type="ChEBI" id="CHEBI:57472"/>
        <note>ligand shared between tetrameric partners</note>
    </ligand>
</feature>
<feature type="binding site" description="in chain A" evidence="2">
    <location>
        <position position="114"/>
    </location>
    <ligand>
        <name>2-(N(omega)-L-arginino)succinate</name>
        <dbReference type="ChEBI" id="CHEBI:57472"/>
        <note>ligand shared between tetrameric partners</note>
    </ligand>
</feature>
<feature type="binding site" description="in chain C" evidence="2">
    <location>
        <position position="159"/>
    </location>
    <ligand>
        <name>2-(N(omega)-L-arginino)succinate</name>
        <dbReference type="ChEBI" id="CHEBI:57472"/>
        <note>ligand shared between tetrameric partners</note>
    </ligand>
</feature>
<feature type="binding site" description="in chain B" evidence="2">
    <location>
        <position position="289"/>
    </location>
    <ligand>
        <name>2-(N(omega)-L-arginino)succinate</name>
        <dbReference type="ChEBI" id="CHEBI:57472"/>
        <note>ligand shared between tetrameric partners</note>
    </ligand>
</feature>
<feature type="binding site" description="in chain A" evidence="2">
    <location>
        <position position="321"/>
    </location>
    <ligand>
        <name>2-(N(omega)-L-arginino)succinate</name>
        <dbReference type="ChEBI" id="CHEBI:57472"/>
        <note>ligand shared between tetrameric partners</note>
    </ligand>
</feature>
<feature type="binding site" description="in chain A" evidence="2">
    <location>
        <position position="326"/>
    </location>
    <ligand>
        <name>2-(N(omega)-L-arginino)succinate</name>
        <dbReference type="ChEBI" id="CHEBI:57472"/>
        <note>ligand shared between tetrameric partners</note>
    </ligand>
</feature>
<feature type="binding site" description="in chain A" evidence="2">
    <location>
        <position position="329"/>
    </location>
    <ligand>
        <name>2-(N(omega)-L-arginino)succinate</name>
        <dbReference type="ChEBI" id="CHEBI:57472"/>
        <note>ligand shared between tetrameric partners</note>
    </ligand>
</feature>
<feature type="site" description="Increases basicity of active site His" evidence="2">
    <location>
        <position position="294"/>
    </location>
</feature>
<feature type="modified residue" description="N-acetylalanine" evidence="3">
    <location>
        <position position="2"/>
    </location>
</feature>
<feature type="modified residue" description="N6-acetyllysine" evidence="3">
    <location>
        <position position="7"/>
    </location>
</feature>
<feature type="modified residue" description="N6-acetyllysine" evidence="1">
    <location>
        <position position="69"/>
    </location>
</feature>
<feature type="modified residue" description="N6-acetyllysine" evidence="1">
    <location>
        <position position="288"/>
    </location>
</feature>
<name>ARLY_MACFA</name>
<keyword id="KW-0007">Acetylation</keyword>
<keyword id="KW-0028">Amino-acid biosynthesis</keyword>
<keyword id="KW-0055">Arginine biosynthesis</keyword>
<keyword id="KW-0456">Lyase</keyword>
<keyword id="KW-1185">Reference proteome</keyword>
<keyword id="KW-0835">Urea cycle</keyword>
<sequence length="464" mass="51808">MASESGKLWGGRFVGAVDPIMEKFNASIAYDRHLWEVDVQGSKAYSRGLEKAGLLTKAEMDQILHGLDKVAEEWAQCTFKLSPNDEDIHTANERRLKELIGETAGKLHTGRSRNDQVVTDLRLWMRQTCSTLSGLLWELIRTMVDRAEAERDVLFPGYTHLQRAQPIRWSHWILSHAVALTRDSERLLEVRKRINVLPLGSGAIAGNPLSVDRELLRAELNFGAITLNSMDATSERDFVAEFLFWASLCMTHLSRMAEDLILYCTKEFSFVQLSDAYSTGSSLMPQKKNPDSLELIRSKAGRVFGRCAGLLMTLKGLPSTYNKDLQEDKEAVFEVSDTMSAVLQVATGVISTLQIHRENMGQALSPDMLATDLAYYLVRKGMPFRQAHEASGKAVFMAETKGVALNELSLQELQTISPLFSGDVSCVWDYGHSVEQYGALGGTARSSVDWQIRQVRALLQTQQA</sequence>
<proteinExistence type="evidence at transcript level"/>